<accession>A9NA51</accession>
<keyword id="KW-0378">Hydrolase</keyword>
<keyword id="KW-0441">Lipid A biosynthesis</keyword>
<keyword id="KW-0444">Lipid biosynthesis</keyword>
<keyword id="KW-0443">Lipid metabolism</keyword>
<keyword id="KW-0479">Metal-binding</keyword>
<keyword id="KW-0862">Zinc</keyword>
<name>LPXC_COXBR</name>
<dbReference type="EC" id="3.5.1.108" evidence="1"/>
<dbReference type="EMBL" id="CP000890">
    <property type="protein sequence ID" value="ABX77639.1"/>
    <property type="molecule type" value="Genomic_DNA"/>
</dbReference>
<dbReference type="RefSeq" id="WP_010957401.1">
    <property type="nucleotide sequence ID" value="NC_010117.1"/>
</dbReference>
<dbReference type="SMR" id="A9NA51"/>
<dbReference type="KEGG" id="cbs:COXBURSA331_A0231"/>
<dbReference type="HOGENOM" id="CLU_046528_1_0_6"/>
<dbReference type="UniPathway" id="UPA00359">
    <property type="reaction ID" value="UER00478"/>
</dbReference>
<dbReference type="GO" id="GO:0016020">
    <property type="term" value="C:membrane"/>
    <property type="evidence" value="ECO:0007669"/>
    <property type="project" value="GOC"/>
</dbReference>
<dbReference type="GO" id="GO:0046872">
    <property type="term" value="F:metal ion binding"/>
    <property type="evidence" value="ECO:0007669"/>
    <property type="project" value="UniProtKB-KW"/>
</dbReference>
<dbReference type="GO" id="GO:0103117">
    <property type="term" value="F:UDP-3-O-acyl-N-acetylglucosamine deacetylase activity"/>
    <property type="evidence" value="ECO:0007669"/>
    <property type="project" value="UniProtKB-UniRule"/>
</dbReference>
<dbReference type="GO" id="GO:0009245">
    <property type="term" value="P:lipid A biosynthetic process"/>
    <property type="evidence" value="ECO:0007669"/>
    <property type="project" value="UniProtKB-UniRule"/>
</dbReference>
<dbReference type="Gene3D" id="3.30.230.20">
    <property type="entry name" value="lpxc deacetylase, domain 1"/>
    <property type="match status" value="1"/>
</dbReference>
<dbReference type="Gene3D" id="3.30.1700.10">
    <property type="entry name" value="lpxc deacetylase, domain 2"/>
    <property type="match status" value="1"/>
</dbReference>
<dbReference type="HAMAP" id="MF_00388">
    <property type="entry name" value="LpxC"/>
    <property type="match status" value="1"/>
</dbReference>
<dbReference type="InterPro" id="IPR020568">
    <property type="entry name" value="Ribosomal_Su5_D2-typ_SF"/>
</dbReference>
<dbReference type="InterPro" id="IPR004463">
    <property type="entry name" value="UDP-acyl_GlcNac_deAcase"/>
</dbReference>
<dbReference type="InterPro" id="IPR011334">
    <property type="entry name" value="UDP-acyl_GlcNac_deAcase_C"/>
</dbReference>
<dbReference type="InterPro" id="IPR015870">
    <property type="entry name" value="UDP-acyl_N-AcGlcN_deAcase_N"/>
</dbReference>
<dbReference type="NCBIfam" id="TIGR00325">
    <property type="entry name" value="lpxC"/>
    <property type="match status" value="1"/>
</dbReference>
<dbReference type="PANTHER" id="PTHR33694">
    <property type="entry name" value="UDP-3-O-ACYL-N-ACETYLGLUCOSAMINE DEACETYLASE 1, MITOCHONDRIAL-RELATED"/>
    <property type="match status" value="1"/>
</dbReference>
<dbReference type="PANTHER" id="PTHR33694:SF1">
    <property type="entry name" value="UDP-3-O-ACYL-N-ACETYLGLUCOSAMINE DEACETYLASE 1, MITOCHONDRIAL-RELATED"/>
    <property type="match status" value="1"/>
</dbReference>
<dbReference type="Pfam" id="PF03331">
    <property type="entry name" value="LpxC"/>
    <property type="match status" value="1"/>
</dbReference>
<dbReference type="SUPFAM" id="SSF54211">
    <property type="entry name" value="Ribosomal protein S5 domain 2-like"/>
    <property type="match status" value="2"/>
</dbReference>
<reference key="1">
    <citation type="submission" date="2007-11" db="EMBL/GenBank/DDBJ databases">
        <title>Genome sequencing of phylogenetically and phenotypically diverse Coxiella burnetii isolates.</title>
        <authorList>
            <person name="Seshadri R."/>
            <person name="Samuel J.E."/>
        </authorList>
    </citation>
    <scope>NUCLEOTIDE SEQUENCE [LARGE SCALE GENOMIC DNA]</scope>
    <source>
        <strain>RSA 331 / Henzerling II</strain>
    </source>
</reference>
<gene>
    <name evidence="1" type="primary">lpxC</name>
    <name type="ordered locus">COXBURSA331_A0231</name>
</gene>
<comment type="function">
    <text evidence="1">Catalyzes the hydrolysis of UDP-3-O-myristoyl-N-acetylglucosamine to form UDP-3-O-myristoylglucosamine and acetate, the committed step in lipid A biosynthesis.</text>
</comment>
<comment type="catalytic activity">
    <reaction evidence="1">
        <text>a UDP-3-O-[(3R)-3-hydroxyacyl]-N-acetyl-alpha-D-glucosamine + H2O = a UDP-3-O-[(3R)-3-hydroxyacyl]-alpha-D-glucosamine + acetate</text>
        <dbReference type="Rhea" id="RHEA:67816"/>
        <dbReference type="ChEBI" id="CHEBI:15377"/>
        <dbReference type="ChEBI" id="CHEBI:30089"/>
        <dbReference type="ChEBI" id="CHEBI:137740"/>
        <dbReference type="ChEBI" id="CHEBI:173225"/>
        <dbReference type="EC" id="3.5.1.108"/>
    </reaction>
</comment>
<comment type="cofactor">
    <cofactor evidence="1">
        <name>Zn(2+)</name>
        <dbReference type="ChEBI" id="CHEBI:29105"/>
    </cofactor>
</comment>
<comment type="pathway">
    <text evidence="1">Glycolipid biosynthesis; lipid IV(A) biosynthesis; lipid IV(A) from (3R)-3-hydroxytetradecanoyl-[acyl-carrier-protein] and UDP-N-acetyl-alpha-D-glucosamine: step 2/6.</text>
</comment>
<comment type="similarity">
    <text evidence="1">Belongs to the LpxC family.</text>
</comment>
<protein>
    <recommendedName>
        <fullName evidence="1">UDP-3-O-acyl-N-acetylglucosamine deacetylase</fullName>
        <shortName evidence="1">UDP-3-O-acyl-GlcNAc deacetylase</shortName>
        <ecNumber evidence="1">3.5.1.108</ecNumber>
    </recommendedName>
    <alternativeName>
        <fullName evidence="1">UDP-3-O-[R-3-hydroxymyristoyl]-N-acetylglucosamine deacetylase</fullName>
    </alternativeName>
</protein>
<organism>
    <name type="scientific">Coxiella burnetii (strain RSA 331 / Henzerling II)</name>
    <dbReference type="NCBI Taxonomy" id="360115"/>
    <lineage>
        <taxon>Bacteria</taxon>
        <taxon>Pseudomonadati</taxon>
        <taxon>Pseudomonadota</taxon>
        <taxon>Gammaproteobacteria</taxon>
        <taxon>Legionellales</taxon>
        <taxon>Coxiellaceae</taxon>
        <taxon>Coxiella</taxon>
    </lineage>
</organism>
<sequence length="303" mass="33514">MIKQRTLKNVVRATGVGVHTGEKVYLTLRPAPPNTGIIFCRTDLDPVVQIPARVNYIGDTSLSTCLTKGDVRIATVEHLLSALAGVGVDNLYIDLTSPELPIMDGSAGPFVFLIQSAGIEEQNAPKEFIRIKQRVKIEEADKSVMVEPYNGFKISFGIDFDHPLFNEHNQNATLDFSSTSYVKEVSRARTFGFLSDYEFIRKNNLALGASLDNALVLDEYKILNQDGLRYPDEFVKHKILDVIGDLYLLGRSLIGSFSGVKSGHTLNSQLLKQLLATKSAWEIVTFKDPSELPFAYTPVAMTA</sequence>
<evidence type="ECO:0000255" key="1">
    <source>
        <dbReference type="HAMAP-Rule" id="MF_00388"/>
    </source>
</evidence>
<feature type="chain" id="PRO_1000080217" description="UDP-3-O-acyl-N-acetylglucosamine deacetylase">
    <location>
        <begin position="1"/>
        <end position="303"/>
    </location>
</feature>
<feature type="active site" description="Proton donor" evidence="1">
    <location>
        <position position="264"/>
    </location>
</feature>
<feature type="binding site" evidence="1">
    <location>
        <position position="78"/>
    </location>
    <ligand>
        <name>Zn(2+)</name>
        <dbReference type="ChEBI" id="CHEBI:29105"/>
    </ligand>
</feature>
<feature type="binding site" evidence="1">
    <location>
        <position position="237"/>
    </location>
    <ligand>
        <name>Zn(2+)</name>
        <dbReference type="ChEBI" id="CHEBI:29105"/>
    </ligand>
</feature>
<feature type="binding site" evidence="1">
    <location>
        <position position="241"/>
    </location>
    <ligand>
        <name>Zn(2+)</name>
        <dbReference type="ChEBI" id="CHEBI:29105"/>
    </ligand>
</feature>
<proteinExistence type="inferred from homology"/>